<evidence type="ECO:0000250" key="1">
    <source>
        <dbReference type="UniProtKB" id="P30902"/>
    </source>
</evidence>
<evidence type="ECO:0000255" key="2">
    <source>
        <dbReference type="PIRNR" id="PIRNR005514"/>
    </source>
</evidence>
<evidence type="ECO:0000269" key="3">
    <source>
    </source>
</evidence>
<evidence type="ECO:0000269" key="4">
    <source>
    </source>
</evidence>
<evidence type="ECO:0000303" key="5">
    <source>
    </source>
</evidence>
<evidence type="ECO:0000305" key="6"/>
<evidence type="ECO:0000305" key="7">
    <source>
    </source>
</evidence>
<evidence type="ECO:0000312" key="8">
    <source>
        <dbReference type="EMBL" id="CAG82814.1"/>
    </source>
</evidence>
<evidence type="ECO:0000312" key="9">
    <source>
        <dbReference type="Proteomes" id="UP000001300"/>
    </source>
</evidence>
<dbReference type="EMBL" id="CR382128">
    <property type="protein sequence ID" value="CAG82814.1"/>
    <property type="molecule type" value="Genomic_DNA"/>
</dbReference>
<dbReference type="RefSeq" id="XP_500583.1">
    <property type="nucleotide sequence ID" value="XM_500583.1"/>
</dbReference>
<dbReference type="SMR" id="Q6CFH9"/>
<dbReference type="FunCoup" id="Q6CFH9">
    <property type="interactions" value="528"/>
</dbReference>
<dbReference type="STRING" id="284591.Q6CFH9"/>
<dbReference type="EnsemblFungi" id="CAG82814">
    <property type="protein sequence ID" value="CAG82814"/>
    <property type="gene ID" value="YALI0_B06831g"/>
</dbReference>
<dbReference type="KEGG" id="yli:2907546"/>
<dbReference type="VEuPathDB" id="FungiDB:YALI0_B06831g"/>
<dbReference type="HOGENOM" id="CLU_080463_0_0_1"/>
<dbReference type="InParanoid" id="Q6CFH9"/>
<dbReference type="OMA" id="VSKGRWA"/>
<dbReference type="OrthoDB" id="110439at4891"/>
<dbReference type="Proteomes" id="UP000001300">
    <property type="component" value="Chromosome B"/>
</dbReference>
<dbReference type="GO" id="GO:0005743">
    <property type="term" value="C:mitochondrial inner membrane"/>
    <property type="evidence" value="ECO:0007669"/>
    <property type="project" value="UniProtKB-SubCell"/>
</dbReference>
<dbReference type="GO" id="GO:0045259">
    <property type="term" value="C:proton-transporting ATP synthase complex"/>
    <property type="evidence" value="ECO:0007669"/>
    <property type="project" value="UniProtKB-KW"/>
</dbReference>
<dbReference type="GO" id="GO:0046933">
    <property type="term" value="F:proton-transporting ATP synthase activity, rotational mechanism"/>
    <property type="evidence" value="ECO:0007669"/>
    <property type="project" value="EnsemblFungi"/>
</dbReference>
<dbReference type="GO" id="GO:0015986">
    <property type="term" value="P:proton motive force-driven ATP synthesis"/>
    <property type="evidence" value="ECO:0000318"/>
    <property type="project" value="GO_Central"/>
</dbReference>
<dbReference type="Gene3D" id="6.10.280.70">
    <property type="match status" value="1"/>
</dbReference>
<dbReference type="InterPro" id="IPR008689">
    <property type="entry name" value="ATP_synth_F0_dsu_mt"/>
</dbReference>
<dbReference type="InterPro" id="IPR036228">
    <property type="entry name" value="ATP_synth_F0_dsu_sf_mt"/>
</dbReference>
<dbReference type="PANTHER" id="PTHR12700">
    <property type="entry name" value="ATP SYNTHASE SUBUNIT D, MITOCHONDRIAL"/>
    <property type="match status" value="1"/>
</dbReference>
<dbReference type="Pfam" id="PF05873">
    <property type="entry name" value="Mt_ATP-synt_D"/>
    <property type="match status" value="1"/>
</dbReference>
<dbReference type="PIRSF" id="PIRSF005514">
    <property type="entry name" value="ATPase_F0_D_mt"/>
    <property type="match status" value="1"/>
</dbReference>
<dbReference type="SUPFAM" id="SSF161065">
    <property type="entry name" value="ATP synthase D chain-like"/>
    <property type="match status" value="1"/>
</dbReference>
<accession>Q6CFH9</accession>
<proteinExistence type="evidence at protein level"/>
<comment type="function">
    <text evidence="3 4">Mitochondrial membrane ATP synthase (F(1)F(0) ATP synthase or Complex V) produces ATP from ADP in the presence of a proton gradient across the membrane which is generated by electron transport complexes of the respiratory chain (PubMed:25759169). F-type ATP synthases consist of two structural domains, F(1) - containing the extramembraneous catalytic core, and F(0) - containing the membrane proton channel, linked together by a central stalk and a peripheral stalk (PubMed:27373333). During catalysis, ATP synthesis in the catalytic domain of F(1) is coupled via a rotary mechanism of the central stalk subunits to proton translocation (PubMed:27373333). Part of the complex F(0) domain and the peripheral stalk, which acts as a stator to hold the catalytic alpha/ATP1(3)beta/ATP2(3) subcomplex and subunit a/ATP6 static relative to the rotary elements (PubMed:27373333).</text>
</comment>
<comment type="subunit">
    <text evidence="3 4">F-type ATP synthases have 2 components, the catalytic core F(1) and the membrane-embedded component F(0), linked together by a central stalk and a peripheral stalk (PubMed:27373333). The central stalk, also called rotor shaft, is often seen as part of F(1) (PubMed:27373333). The peripheral stalk is seen as part of F(0) (PubMed:27373333). F(0) contains the membrane channel next to the rotor (PubMed:27373333). F-type ATP synthases form dimers but each monomer functions independently in ATP generation (PubMed:27373333). The dimer consists of 17 different polypeptides: ATP1 (subunit alpha, 3 molecules per monomer, part of F(1)), ATP2 (subunit beta, 3 copies per monomer, part of F(1)), ATP3 (subunit gamma, part of the central stalk), ATP4 (subunit b, part of the peripheral stalk), ATP5/OSCP (subunit 5/OSCP, part of the peripheral stalk), ATP6 (subunit a, part of the peripheral stalk), ATP7 (subunit d, part of the peripheral stalk), ATP8 (subunit 8, part of the peripheral stalk), OLI1 (subunit c, part of the rotor, 10 molecules per monomer), ATP14 (subunit h, part of the peripheral stalk), ATP15 (subunit epsilon, part of the central stalk), ATP16 (subunit delta, part of the central stalk), ATP17 (subunit f, part of the peripheral stalk), ATP18 (subunit i/j, part of the peripheral stalk), ATP19 (subunit k, dimer-specific, at interface between monomers), ATP20 (subunit g, at interface between monomers), TIM11 (subunit e, at interface between monomers) (PubMed:25759169, PubMed:27373333).</text>
</comment>
<comment type="subcellular location">
    <subcellularLocation>
        <location evidence="7">Mitochondrion inner membrane</location>
        <topology evidence="7">Peripheral membrane protein</topology>
        <orientation evidence="7">Matrix side</orientation>
    </subcellularLocation>
    <text evidence="7">The F-type ATP synthase complex is anchored in the mitochondrial inner membrane via the F(0) domain with the F(1) domain and the peripheral stalk extending into the mitochondrial matrix.</text>
</comment>
<comment type="mass spectrometry" mass="19690.2" method="MALDI" evidence="3"/>
<comment type="similarity">
    <text evidence="2">Belongs to the ATPase d subunit family.</text>
</comment>
<organism evidence="9">
    <name type="scientific">Yarrowia lipolytica (strain CLIB 122 / E 150)</name>
    <name type="common">Yeast</name>
    <name type="synonym">Candida lipolytica</name>
    <dbReference type="NCBI Taxonomy" id="284591"/>
    <lineage>
        <taxon>Eukaryota</taxon>
        <taxon>Fungi</taxon>
        <taxon>Dikarya</taxon>
        <taxon>Ascomycota</taxon>
        <taxon>Saccharomycotina</taxon>
        <taxon>Dipodascomycetes</taxon>
        <taxon>Dipodascales</taxon>
        <taxon>Dipodascales incertae sedis</taxon>
        <taxon>Yarrowia</taxon>
    </lineage>
</organism>
<reference evidence="9" key="1">
    <citation type="journal article" date="2004" name="Nature">
        <title>Genome evolution in yeasts.</title>
        <authorList>
            <person name="Dujon B."/>
            <person name="Sherman D."/>
            <person name="Fischer G."/>
            <person name="Durrens P."/>
            <person name="Casaregola S."/>
            <person name="Lafontaine I."/>
            <person name="de Montigny J."/>
            <person name="Marck C."/>
            <person name="Neuveglise C."/>
            <person name="Talla E."/>
            <person name="Goffard N."/>
            <person name="Frangeul L."/>
            <person name="Aigle M."/>
            <person name="Anthouard V."/>
            <person name="Babour A."/>
            <person name="Barbe V."/>
            <person name="Barnay S."/>
            <person name="Blanchin S."/>
            <person name="Beckerich J.-M."/>
            <person name="Beyne E."/>
            <person name="Bleykasten C."/>
            <person name="Boisrame A."/>
            <person name="Boyer J."/>
            <person name="Cattolico L."/>
            <person name="Confanioleri F."/>
            <person name="de Daruvar A."/>
            <person name="Despons L."/>
            <person name="Fabre E."/>
            <person name="Fairhead C."/>
            <person name="Ferry-Dumazet H."/>
            <person name="Groppi A."/>
            <person name="Hantraye F."/>
            <person name="Hennequin C."/>
            <person name="Jauniaux N."/>
            <person name="Joyet P."/>
            <person name="Kachouri R."/>
            <person name="Kerrest A."/>
            <person name="Koszul R."/>
            <person name="Lemaire M."/>
            <person name="Lesur I."/>
            <person name="Ma L."/>
            <person name="Muller H."/>
            <person name="Nicaud J.-M."/>
            <person name="Nikolski M."/>
            <person name="Oztas S."/>
            <person name="Ozier-Kalogeropoulos O."/>
            <person name="Pellenz S."/>
            <person name="Potier S."/>
            <person name="Richard G.-F."/>
            <person name="Straub M.-L."/>
            <person name="Suleau A."/>
            <person name="Swennen D."/>
            <person name="Tekaia F."/>
            <person name="Wesolowski-Louvel M."/>
            <person name="Westhof E."/>
            <person name="Wirth B."/>
            <person name="Zeniou-Meyer M."/>
            <person name="Zivanovic Y."/>
            <person name="Bolotin-Fukuhara M."/>
            <person name="Thierry A."/>
            <person name="Bouchier C."/>
            <person name="Caudron B."/>
            <person name="Scarpelli C."/>
            <person name="Gaillardin C."/>
            <person name="Weissenbach J."/>
            <person name="Wincker P."/>
            <person name="Souciet J.-L."/>
        </authorList>
    </citation>
    <scope>NUCLEOTIDE SEQUENCE [LARGE SCALE GENOMIC DNA]</scope>
    <source>
        <strain>CLIB 122 / E 150</strain>
    </source>
</reference>
<reference evidence="6" key="2">
    <citation type="journal article" date="2015" name="Biochem. J.">
        <title>The purification and characterization of ATP synthase complexes from the mitochondria of four fungal species.</title>
        <authorList>
            <person name="Liu S."/>
            <person name="Charlesworth T.J."/>
            <person name="Bason J.V."/>
            <person name="Montgomery M.G."/>
            <person name="Harbour M.E."/>
            <person name="Fearnley I.M."/>
            <person name="Walker J.E."/>
        </authorList>
    </citation>
    <scope>IDENTIFICATION IN ATP SYNTHASE COMPLEX</scope>
    <scope>FUNCTION OF ATP SYNTHASE COMPLEX</scope>
    <scope>SUBUNIT</scope>
    <scope>SUBCELLULAR LOCATION</scope>
    <scope>MASS SPECTROMETRY</scope>
    <scope>IDENTIFICATION BY MASS SPECTROMETRY</scope>
    <source>
        <strain evidence="5">CLIB 122 / E 150</strain>
    </source>
</reference>
<reference evidence="6" key="3">
    <citation type="journal article" date="2016" name="Mol. Cell">
        <title>Structure of a Complete ATP Synthase Dimer Reveals the Molecular Basis of Inner Mitochondrial Membrane Morphology.</title>
        <authorList>
            <person name="Hahn A."/>
            <person name="Parey K."/>
            <person name="Bublitz M."/>
            <person name="Mills D.J."/>
            <person name="Zickermann V."/>
            <person name="Vonck J."/>
            <person name="Kuehlbrandt W."/>
            <person name="Meier T."/>
        </authorList>
    </citation>
    <scope>STRUCTURE BY ELECTRON MICROSCOPY (7.7 ANGSTROMS) OF DIMERIC ATP SYNTHASE COMPLEX</scope>
    <scope>FUNCTION</scope>
    <scope>SUBUNIT</scope>
    <scope>SUBCELLULAR LOCATION</scope>
    <scope>IDENTIFICATION BY MASS SPECTROMETRY</scope>
</reference>
<feature type="initiator methionine" description="Removed" evidence="4">
    <location>
        <position position="1"/>
    </location>
</feature>
<feature type="chain" id="PRO_0000445308" description="ATP synthase subunit d, mitochondrial" evidence="6">
    <location>
        <begin position="2"/>
        <end position="176"/>
    </location>
</feature>
<sequence length="176" mass="19821">MSVAAARSSAVKVDWGKIVSSLGLTGATVSSLQAFRKRHEEAKKNAYELQNQPTTVDFAHYRKVLKNQKVVDEIEQHFKSFKPVTYDVSKQLKTIDAFEAKAIEDAKATEGKVNQEIGDLQKTLENIESARPFDQLSVDDVFKARPDLEKKIEEMVKKGRWSVPGYNEKFGSVVLM</sequence>
<protein>
    <recommendedName>
        <fullName evidence="2">ATP synthase subunit d, mitochondrial</fullName>
    </recommendedName>
</protein>
<keyword id="KW-0066">ATP synthesis</keyword>
<keyword id="KW-0138">CF(0)</keyword>
<keyword id="KW-0375">Hydrogen ion transport</keyword>
<keyword id="KW-0406">Ion transport</keyword>
<keyword id="KW-0472">Membrane</keyword>
<keyword id="KW-0496">Mitochondrion</keyword>
<keyword id="KW-0999">Mitochondrion inner membrane</keyword>
<keyword id="KW-1185">Reference proteome</keyword>
<keyword id="KW-0813">Transport</keyword>
<name>ATP7_YARLI</name>
<gene>
    <name evidence="1" type="primary">ATP7</name>
    <name evidence="8" type="ordered locus">YALI0_B06831g</name>
</gene>